<dbReference type="EC" id="4.2.1.11" evidence="1"/>
<dbReference type="EMBL" id="CP000850">
    <property type="protein sequence ID" value="ABV96751.1"/>
    <property type="molecule type" value="Genomic_DNA"/>
</dbReference>
<dbReference type="SMR" id="A8M2Y3"/>
<dbReference type="STRING" id="391037.Sare_0833"/>
<dbReference type="KEGG" id="saq:Sare_0833"/>
<dbReference type="PATRIC" id="fig|391037.6.peg.850"/>
<dbReference type="eggNOG" id="COG0148">
    <property type="taxonomic scope" value="Bacteria"/>
</dbReference>
<dbReference type="HOGENOM" id="CLU_031223_2_1_11"/>
<dbReference type="OrthoDB" id="9804716at2"/>
<dbReference type="UniPathway" id="UPA00109">
    <property type="reaction ID" value="UER00187"/>
</dbReference>
<dbReference type="GO" id="GO:0009986">
    <property type="term" value="C:cell surface"/>
    <property type="evidence" value="ECO:0007669"/>
    <property type="project" value="UniProtKB-SubCell"/>
</dbReference>
<dbReference type="GO" id="GO:0005576">
    <property type="term" value="C:extracellular region"/>
    <property type="evidence" value="ECO:0007669"/>
    <property type="project" value="UniProtKB-SubCell"/>
</dbReference>
<dbReference type="GO" id="GO:0000015">
    <property type="term" value="C:phosphopyruvate hydratase complex"/>
    <property type="evidence" value="ECO:0007669"/>
    <property type="project" value="InterPro"/>
</dbReference>
<dbReference type="GO" id="GO:0000287">
    <property type="term" value="F:magnesium ion binding"/>
    <property type="evidence" value="ECO:0007669"/>
    <property type="project" value="UniProtKB-UniRule"/>
</dbReference>
<dbReference type="GO" id="GO:0004634">
    <property type="term" value="F:phosphopyruvate hydratase activity"/>
    <property type="evidence" value="ECO:0007669"/>
    <property type="project" value="UniProtKB-UniRule"/>
</dbReference>
<dbReference type="GO" id="GO:0006096">
    <property type="term" value="P:glycolytic process"/>
    <property type="evidence" value="ECO:0007669"/>
    <property type="project" value="UniProtKB-UniRule"/>
</dbReference>
<dbReference type="CDD" id="cd03313">
    <property type="entry name" value="enolase"/>
    <property type="match status" value="1"/>
</dbReference>
<dbReference type="FunFam" id="3.20.20.120:FF:000001">
    <property type="entry name" value="Enolase"/>
    <property type="match status" value="1"/>
</dbReference>
<dbReference type="FunFam" id="3.30.390.10:FF:000001">
    <property type="entry name" value="Enolase"/>
    <property type="match status" value="1"/>
</dbReference>
<dbReference type="Gene3D" id="3.20.20.120">
    <property type="entry name" value="Enolase-like C-terminal domain"/>
    <property type="match status" value="1"/>
</dbReference>
<dbReference type="Gene3D" id="3.30.390.10">
    <property type="entry name" value="Enolase-like, N-terminal domain"/>
    <property type="match status" value="1"/>
</dbReference>
<dbReference type="HAMAP" id="MF_00318">
    <property type="entry name" value="Enolase"/>
    <property type="match status" value="1"/>
</dbReference>
<dbReference type="InterPro" id="IPR000941">
    <property type="entry name" value="Enolase"/>
</dbReference>
<dbReference type="InterPro" id="IPR036849">
    <property type="entry name" value="Enolase-like_C_sf"/>
</dbReference>
<dbReference type="InterPro" id="IPR029017">
    <property type="entry name" value="Enolase-like_N"/>
</dbReference>
<dbReference type="InterPro" id="IPR020810">
    <property type="entry name" value="Enolase_C"/>
</dbReference>
<dbReference type="InterPro" id="IPR020809">
    <property type="entry name" value="Enolase_CS"/>
</dbReference>
<dbReference type="InterPro" id="IPR020811">
    <property type="entry name" value="Enolase_N"/>
</dbReference>
<dbReference type="NCBIfam" id="TIGR01060">
    <property type="entry name" value="eno"/>
    <property type="match status" value="1"/>
</dbReference>
<dbReference type="PANTHER" id="PTHR11902">
    <property type="entry name" value="ENOLASE"/>
    <property type="match status" value="1"/>
</dbReference>
<dbReference type="PANTHER" id="PTHR11902:SF1">
    <property type="entry name" value="ENOLASE"/>
    <property type="match status" value="1"/>
</dbReference>
<dbReference type="Pfam" id="PF00113">
    <property type="entry name" value="Enolase_C"/>
    <property type="match status" value="1"/>
</dbReference>
<dbReference type="Pfam" id="PF03952">
    <property type="entry name" value="Enolase_N"/>
    <property type="match status" value="1"/>
</dbReference>
<dbReference type="PIRSF" id="PIRSF001400">
    <property type="entry name" value="Enolase"/>
    <property type="match status" value="1"/>
</dbReference>
<dbReference type="PRINTS" id="PR00148">
    <property type="entry name" value="ENOLASE"/>
</dbReference>
<dbReference type="SFLD" id="SFLDF00002">
    <property type="entry name" value="enolase"/>
    <property type="match status" value="1"/>
</dbReference>
<dbReference type="SFLD" id="SFLDG00178">
    <property type="entry name" value="enolase"/>
    <property type="match status" value="1"/>
</dbReference>
<dbReference type="SMART" id="SM01192">
    <property type="entry name" value="Enolase_C"/>
    <property type="match status" value="1"/>
</dbReference>
<dbReference type="SMART" id="SM01193">
    <property type="entry name" value="Enolase_N"/>
    <property type="match status" value="1"/>
</dbReference>
<dbReference type="SUPFAM" id="SSF51604">
    <property type="entry name" value="Enolase C-terminal domain-like"/>
    <property type="match status" value="1"/>
</dbReference>
<dbReference type="SUPFAM" id="SSF54826">
    <property type="entry name" value="Enolase N-terminal domain-like"/>
    <property type="match status" value="1"/>
</dbReference>
<dbReference type="PROSITE" id="PS00164">
    <property type="entry name" value="ENOLASE"/>
    <property type="match status" value="1"/>
</dbReference>
<accession>A8M2Y3</accession>
<organism>
    <name type="scientific">Salinispora arenicola (strain CNS-205)</name>
    <dbReference type="NCBI Taxonomy" id="391037"/>
    <lineage>
        <taxon>Bacteria</taxon>
        <taxon>Bacillati</taxon>
        <taxon>Actinomycetota</taxon>
        <taxon>Actinomycetes</taxon>
        <taxon>Micromonosporales</taxon>
        <taxon>Micromonosporaceae</taxon>
        <taxon>Salinispora</taxon>
    </lineage>
</organism>
<gene>
    <name evidence="1" type="primary">eno</name>
    <name type="ordered locus">Sare_0833</name>
</gene>
<feature type="chain" id="PRO_1000079146" description="Enolase">
    <location>
        <begin position="1"/>
        <end position="427"/>
    </location>
</feature>
<feature type="active site" description="Proton donor" evidence="1">
    <location>
        <position position="205"/>
    </location>
</feature>
<feature type="active site" description="Proton acceptor" evidence="1">
    <location>
        <position position="335"/>
    </location>
</feature>
<feature type="binding site" evidence="1">
    <location>
        <position position="163"/>
    </location>
    <ligand>
        <name>(2R)-2-phosphoglycerate</name>
        <dbReference type="ChEBI" id="CHEBI:58289"/>
    </ligand>
</feature>
<feature type="binding site" evidence="1">
    <location>
        <position position="242"/>
    </location>
    <ligand>
        <name>Mg(2+)</name>
        <dbReference type="ChEBI" id="CHEBI:18420"/>
    </ligand>
</feature>
<feature type="binding site" evidence="1">
    <location>
        <position position="283"/>
    </location>
    <ligand>
        <name>Mg(2+)</name>
        <dbReference type="ChEBI" id="CHEBI:18420"/>
    </ligand>
</feature>
<feature type="binding site" evidence="1">
    <location>
        <position position="310"/>
    </location>
    <ligand>
        <name>Mg(2+)</name>
        <dbReference type="ChEBI" id="CHEBI:18420"/>
    </ligand>
</feature>
<feature type="binding site" evidence="1">
    <location>
        <position position="335"/>
    </location>
    <ligand>
        <name>(2R)-2-phosphoglycerate</name>
        <dbReference type="ChEBI" id="CHEBI:58289"/>
    </ligand>
</feature>
<feature type="binding site" evidence="1">
    <location>
        <position position="364"/>
    </location>
    <ligand>
        <name>(2R)-2-phosphoglycerate</name>
        <dbReference type="ChEBI" id="CHEBI:58289"/>
    </ligand>
</feature>
<feature type="binding site" evidence="1">
    <location>
        <position position="365"/>
    </location>
    <ligand>
        <name>(2R)-2-phosphoglycerate</name>
        <dbReference type="ChEBI" id="CHEBI:58289"/>
    </ligand>
</feature>
<feature type="binding site" evidence="1">
    <location>
        <position position="386"/>
    </location>
    <ligand>
        <name>(2R)-2-phosphoglycerate</name>
        <dbReference type="ChEBI" id="CHEBI:58289"/>
    </ligand>
</feature>
<reference key="1">
    <citation type="submission" date="2007-10" db="EMBL/GenBank/DDBJ databases">
        <title>Complete sequence of Salinispora arenicola CNS-205.</title>
        <authorList>
            <consortium name="US DOE Joint Genome Institute"/>
            <person name="Copeland A."/>
            <person name="Lucas S."/>
            <person name="Lapidus A."/>
            <person name="Barry K."/>
            <person name="Glavina del Rio T."/>
            <person name="Dalin E."/>
            <person name="Tice H."/>
            <person name="Pitluck S."/>
            <person name="Foster B."/>
            <person name="Schmutz J."/>
            <person name="Larimer F."/>
            <person name="Land M."/>
            <person name="Hauser L."/>
            <person name="Kyrpides N."/>
            <person name="Ivanova N."/>
            <person name="Jensen P.R."/>
            <person name="Moore B.S."/>
            <person name="Penn K."/>
            <person name="Jenkins C."/>
            <person name="Udwary D."/>
            <person name="Xiang L."/>
            <person name="Gontang E."/>
            <person name="Richardson P."/>
        </authorList>
    </citation>
    <scope>NUCLEOTIDE SEQUENCE [LARGE SCALE GENOMIC DNA]</scope>
    <source>
        <strain>CNS-205</strain>
    </source>
</reference>
<proteinExistence type="inferred from homology"/>
<sequence>MATIEGIVAREILDSRGNPTVEVEVGLDDGTIARAAVPSGASTGAFEAIELRDGDKDRYLGKGVATAVSNIEDKIVDELIGYEASEQRLIDQKMLDIDGTDNKSELGANAILGVSLAVAKAAADSAELTLYRYLGGPNAHLLPVPMMNILNGGAHADSNVDIQEFMIAPIGAPTFREALRSGAEVYHALKSVLKKKDLATGLGDEGGFAPNLPTNAAALDLIAEAVEKAGYRLGTDIVFALDVAATEFFANGTYTFEGAAKTAEEMSSYYTKLADAYPIVSIEDPLAEDDWSGWQTLTASVGDRIQIVGDDLFVTNPQRIARGIAEHAANAVLVKVNQIGSLTETLDAVDLAHRAGFRCMMSHRSGETEDTTIADLAVATGCGQIKTGAPARSDRVAKYNQLLRIEEELADAARYAGAGAFPRYRSA</sequence>
<name>ENO_SALAI</name>
<comment type="function">
    <text evidence="1">Catalyzes the reversible conversion of 2-phosphoglycerate (2-PG) into phosphoenolpyruvate (PEP). It is essential for the degradation of carbohydrates via glycolysis.</text>
</comment>
<comment type="catalytic activity">
    <reaction evidence="1">
        <text>(2R)-2-phosphoglycerate = phosphoenolpyruvate + H2O</text>
        <dbReference type="Rhea" id="RHEA:10164"/>
        <dbReference type="ChEBI" id="CHEBI:15377"/>
        <dbReference type="ChEBI" id="CHEBI:58289"/>
        <dbReference type="ChEBI" id="CHEBI:58702"/>
        <dbReference type="EC" id="4.2.1.11"/>
    </reaction>
</comment>
<comment type="cofactor">
    <cofactor evidence="1">
        <name>Mg(2+)</name>
        <dbReference type="ChEBI" id="CHEBI:18420"/>
    </cofactor>
    <text evidence="1">Binds a second Mg(2+) ion via substrate during catalysis.</text>
</comment>
<comment type="pathway">
    <text evidence="1">Carbohydrate degradation; glycolysis; pyruvate from D-glyceraldehyde 3-phosphate: step 4/5.</text>
</comment>
<comment type="subcellular location">
    <subcellularLocation>
        <location evidence="1">Cytoplasm</location>
    </subcellularLocation>
    <subcellularLocation>
        <location evidence="1">Secreted</location>
    </subcellularLocation>
    <subcellularLocation>
        <location evidence="1">Cell surface</location>
    </subcellularLocation>
    <text evidence="1">Fractions of enolase are present in both the cytoplasm and on the cell surface.</text>
</comment>
<comment type="similarity">
    <text evidence="1">Belongs to the enolase family.</text>
</comment>
<keyword id="KW-0963">Cytoplasm</keyword>
<keyword id="KW-0324">Glycolysis</keyword>
<keyword id="KW-0456">Lyase</keyword>
<keyword id="KW-0460">Magnesium</keyword>
<keyword id="KW-0479">Metal-binding</keyword>
<keyword id="KW-0964">Secreted</keyword>
<evidence type="ECO:0000255" key="1">
    <source>
        <dbReference type="HAMAP-Rule" id="MF_00318"/>
    </source>
</evidence>
<protein>
    <recommendedName>
        <fullName evidence="1">Enolase</fullName>
        <ecNumber evidence="1">4.2.1.11</ecNumber>
    </recommendedName>
    <alternativeName>
        <fullName evidence="1">2-phospho-D-glycerate hydro-lyase</fullName>
    </alternativeName>
    <alternativeName>
        <fullName evidence="1">2-phosphoglycerate dehydratase</fullName>
    </alternativeName>
</protein>